<accession>Q8NFY4</accession>
<accession>A6NF10</accession>
<accession>A6NM95</accession>
<accession>A6NNK1</accession>
<accession>A7E2A0</accession>
<accession>Q8NFY3</accession>
<accession>Q8NFY5</accession>
<accession>Q8NFY6</accession>
<accession>Q8NFY7</accession>
<accession>Q9P249</accession>
<protein>
    <recommendedName>
        <fullName>Semaphorin-6D</fullName>
    </recommendedName>
</protein>
<keyword id="KW-0025">Alternative splicing</keyword>
<keyword id="KW-1003">Cell membrane</keyword>
<keyword id="KW-0963">Cytoplasm</keyword>
<keyword id="KW-0217">Developmental protein</keyword>
<keyword id="KW-0221">Differentiation</keyword>
<keyword id="KW-1015">Disulfide bond</keyword>
<keyword id="KW-0325">Glycoprotein</keyword>
<keyword id="KW-0472">Membrane</keyword>
<keyword id="KW-0524">Neurogenesis</keyword>
<keyword id="KW-0597">Phosphoprotein</keyword>
<keyword id="KW-1267">Proteomics identification</keyword>
<keyword id="KW-1185">Reference proteome</keyword>
<keyword id="KW-0732">Signal</keyword>
<keyword id="KW-0812">Transmembrane</keyword>
<keyword id="KW-1133">Transmembrane helix</keyword>
<evidence type="ECO:0000250" key="1">
    <source>
        <dbReference type="UniProtKB" id="Q76KF0"/>
    </source>
</evidence>
<evidence type="ECO:0000255" key="2"/>
<evidence type="ECO:0000255" key="3">
    <source>
        <dbReference type="PROSITE-ProRule" id="PRU00352"/>
    </source>
</evidence>
<evidence type="ECO:0000256" key="4">
    <source>
        <dbReference type="SAM" id="MobiDB-lite"/>
    </source>
</evidence>
<evidence type="ECO:0000303" key="5">
    <source>
    </source>
</evidence>
<evidence type="ECO:0000303" key="6">
    <source>
    </source>
</evidence>
<evidence type="ECO:0000303" key="7">
    <source>
    </source>
</evidence>
<evidence type="ECO:0000305" key="8"/>
<evidence type="ECO:0000312" key="9">
    <source>
        <dbReference type="HGNC" id="HGNC:16770"/>
    </source>
</evidence>
<evidence type="ECO:0007744" key="10">
    <source>
    </source>
</evidence>
<reference key="1">
    <citation type="journal article" date="2002" name="J. Biol. Chem.">
        <title>Identification, characterization, and functional study of the two novel human members of the semaphorin gene family.</title>
        <authorList>
            <person name="Qu X."/>
            <person name="Wei H."/>
            <person name="Zhai Y."/>
            <person name="Que H."/>
            <person name="Chen Q."/>
            <person name="Tang F."/>
            <person name="Wu Y."/>
            <person name="Xing G."/>
            <person name="Zhu Y."/>
            <person name="Liu S."/>
            <person name="Fan M."/>
            <person name="He F."/>
        </authorList>
    </citation>
    <scope>NUCLEOTIDE SEQUENCE [MRNA] (ISOFORMS 1; 2; 3; 4 AND 7)</scope>
    <scope>SUBCELLULAR LOCATION</scope>
    <scope>TISSUE SPECIFICITY</scope>
    <source>
        <tissue>Brain</tissue>
    </source>
</reference>
<reference key="2">
    <citation type="journal article" date="2000" name="DNA Res.">
        <title>Prediction of the coding sequences of unidentified human genes. XVII. The complete sequences of 100 new cDNA clones from brain which code for large proteins in vitro.</title>
        <authorList>
            <person name="Nagase T."/>
            <person name="Kikuno R."/>
            <person name="Ishikawa K."/>
            <person name="Hirosawa M."/>
            <person name="Ohara O."/>
        </authorList>
    </citation>
    <scope>NUCLEOTIDE SEQUENCE [LARGE SCALE MRNA] (ISOFORM 1)</scope>
    <source>
        <tissue>Brain</tissue>
    </source>
</reference>
<reference key="3">
    <citation type="journal article" date="2002" name="DNA Res.">
        <title>Construction of expression-ready cDNA clones for KIAA genes: manual curation of 330 KIAA cDNA clones.</title>
        <authorList>
            <person name="Nakajima D."/>
            <person name="Okazaki N."/>
            <person name="Yamakawa H."/>
            <person name="Kikuno R."/>
            <person name="Ohara O."/>
            <person name="Nagase T."/>
        </authorList>
    </citation>
    <scope>SEQUENCE REVISION</scope>
</reference>
<reference key="4">
    <citation type="journal article" date="2006" name="Nature">
        <title>Analysis of the DNA sequence and duplication history of human chromosome 15.</title>
        <authorList>
            <person name="Zody M.C."/>
            <person name="Garber M."/>
            <person name="Sharpe T."/>
            <person name="Young S.K."/>
            <person name="Rowen L."/>
            <person name="O'Neill K."/>
            <person name="Whittaker C.A."/>
            <person name="Kamal M."/>
            <person name="Chang J.L."/>
            <person name="Cuomo C.A."/>
            <person name="Dewar K."/>
            <person name="FitzGerald M.G."/>
            <person name="Kodira C.D."/>
            <person name="Madan A."/>
            <person name="Qin S."/>
            <person name="Yang X."/>
            <person name="Abbasi N."/>
            <person name="Abouelleil A."/>
            <person name="Arachchi H.M."/>
            <person name="Baradarani L."/>
            <person name="Birditt B."/>
            <person name="Bloom S."/>
            <person name="Bloom T."/>
            <person name="Borowsky M.L."/>
            <person name="Burke J."/>
            <person name="Butler J."/>
            <person name="Cook A."/>
            <person name="DeArellano K."/>
            <person name="DeCaprio D."/>
            <person name="Dorris L. III"/>
            <person name="Dors M."/>
            <person name="Eichler E.E."/>
            <person name="Engels R."/>
            <person name="Fahey J."/>
            <person name="Fleetwood P."/>
            <person name="Friedman C."/>
            <person name="Gearin G."/>
            <person name="Hall J.L."/>
            <person name="Hensley G."/>
            <person name="Johnson E."/>
            <person name="Jones C."/>
            <person name="Kamat A."/>
            <person name="Kaur A."/>
            <person name="Locke D.P."/>
            <person name="Madan A."/>
            <person name="Munson G."/>
            <person name="Jaffe D.B."/>
            <person name="Lui A."/>
            <person name="Macdonald P."/>
            <person name="Mauceli E."/>
            <person name="Naylor J.W."/>
            <person name="Nesbitt R."/>
            <person name="Nicol R."/>
            <person name="O'Leary S.B."/>
            <person name="Ratcliffe A."/>
            <person name="Rounsley S."/>
            <person name="She X."/>
            <person name="Sneddon K.M.B."/>
            <person name="Stewart S."/>
            <person name="Sougnez C."/>
            <person name="Stone S.M."/>
            <person name="Topham K."/>
            <person name="Vincent D."/>
            <person name="Wang S."/>
            <person name="Zimmer A.R."/>
            <person name="Birren B.W."/>
            <person name="Hood L."/>
            <person name="Lander E.S."/>
            <person name="Nusbaum C."/>
        </authorList>
    </citation>
    <scope>NUCLEOTIDE SEQUENCE [LARGE SCALE GENOMIC DNA]</scope>
</reference>
<reference key="5">
    <citation type="journal article" date="2004" name="Genome Res.">
        <title>The status, quality, and expansion of the NIH full-length cDNA project: the Mammalian Gene Collection (MGC).</title>
        <authorList>
            <consortium name="The MGC Project Team"/>
        </authorList>
    </citation>
    <scope>NUCLEOTIDE SEQUENCE [LARGE SCALE MRNA] (ISOFORM 1)</scope>
</reference>
<reference key="6">
    <citation type="journal article" date="2013" name="J. Proteome Res.">
        <title>Toward a comprehensive characterization of a human cancer cell phosphoproteome.</title>
        <authorList>
            <person name="Zhou H."/>
            <person name="Di Palma S."/>
            <person name="Preisinger C."/>
            <person name="Peng M."/>
            <person name="Polat A.N."/>
            <person name="Heck A.J."/>
            <person name="Mohammed S."/>
        </authorList>
    </citation>
    <scope>PHOSPHORYLATION [LARGE SCALE ANALYSIS] AT SER-723; SER-744; THR-773; SER-931; SER-957 AND SER-983</scope>
    <scope>IDENTIFICATION BY MASS SPECTROMETRY [LARGE SCALE ANALYSIS]</scope>
    <source>
        <tissue>Cervix carcinoma</tissue>
    </source>
</reference>
<organism>
    <name type="scientific">Homo sapiens</name>
    <name type="common">Human</name>
    <dbReference type="NCBI Taxonomy" id="9606"/>
    <lineage>
        <taxon>Eukaryota</taxon>
        <taxon>Metazoa</taxon>
        <taxon>Chordata</taxon>
        <taxon>Craniata</taxon>
        <taxon>Vertebrata</taxon>
        <taxon>Euteleostomi</taxon>
        <taxon>Mammalia</taxon>
        <taxon>Eutheria</taxon>
        <taxon>Euarchontoglires</taxon>
        <taxon>Primates</taxon>
        <taxon>Haplorrhini</taxon>
        <taxon>Catarrhini</taxon>
        <taxon>Hominidae</taxon>
        <taxon>Homo</taxon>
    </lineage>
</organism>
<comment type="function">
    <text evidence="1">Shows growth cone collapsing activity on dorsal root ganglion (DRG) neurons in vitro. May be a stop signal for the DRG neurons in their target areas, and possibly also for other neurons. May also be involved in the maintenance and remodeling of neuronal connections. Ligand of TREM2 with PLXNA1 as coreceptor in dendritic cells, plays a role in the generation of immune responses and skeletal homeostasis (By similarity).</text>
</comment>
<comment type="subcellular location">
    <molecule>Isoform 1</molecule>
    <subcellularLocation>
        <location>Cell membrane</location>
        <topology>Single-pass type I membrane protein</topology>
    </subcellularLocation>
</comment>
<comment type="subcellular location">
    <molecule>Isoform 2</molecule>
    <subcellularLocation>
        <location>Cell membrane</location>
        <topology>Single-pass type I membrane protein</topology>
    </subcellularLocation>
</comment>
<comment type="subcellular location">
    <molecule>Isoform 3</molecule>
    <subcellularLocation>
        <location>Cell membrane</location>
        <topology>Single-pass type I membrane protein</topology>
    </subcellularLocation>
</comment>
<comment type="subcellular location">
    <molecule>Isoform 4</molecule>
    <subcellularLocation>
        <location>Cell membrane</location>
        <topology>Single-pass type I membrane protein</topology>
    </subcellularLocation>
</comment>
<comment type="subcellular location">
    <molecule>Isoform 5</molecule>
    <subcellularLocation>
        <location>Cell membrane</location>
        <topology>Single-pass type I membrane protein</topology>
    </subcellularLocation>
</comment>
<comment type="subcellular location">
    <molecule>Isoform 7</molecule>
    <subcellularLocation>
        <location>Cytoplasm</location>
    </subcellularLocation>
</comment>
<comment type="alternative products">
    <event type="alternative splicing"/>
    <isoform>
        <id>Q8NFY4-1</id>
        <name>4</name>
        <name>SEMA6D.4</name>
        <sequence type="displayed"/>
    </isoform>
    <isoform>
        <id>Q8NFY4-2</id>
        <name>1</name>
        <name>SEMA6D.1</name>
        <sequence type="described" ref="VSP_016565 VSP_016566"/>
    </isoform>
    <isoform>
        <id>Q8NFY4-3</id>
        <name>2</name>
        <name>SEMA6D.2</name>
        <sequence type="described" ref="VSP_016566"/>
    </isoform>
    <isoform>
        <id>Q8NFY4-4</id>
        <name>3</name>
        <name>SEMA6D.3</name>
        <sequence type="described" ref="VSP_016567"/>
    </isoform>
    <isoform>
        <id>Q8NFY4-5</id>
        <name>5</name>
        <sequence type="described" ref="VSP_016565 VSP_016567"/>
    </isoform>
    <isoform>
        <id>Q8NFY4-6</id>
        <name>6</name>
        <sequence type="described" ref="VSP_016572"/>
    </isoform>
    <isoform>
        <id>Q8NFY4-7</id>
        <name>7</name>
        <name>SEMA6Ds</name>
        <name>Short</name>
        <sequence type="described" ref="VSP_016564"/>
    </isoform>
    <isoform>
        <id>Q8NFY4-8</id>
        <name>8</name>
        <sequence type="described" ref="VSP_016572 VSP_054084"/>
    </isoform>
</comment>
<comment type="similarity">
    <text evidence="8">Belongs to the semaphorin family.</text>
</comment>
<comment type="sequence caution" evidence="8">
    <conflict type="erroneous initiation">
        <sequence resource="EMBL-CDS" id="BAA96003"/>
    </conflict>
    <text>Extended N-terminus.</text>
</comment>
<dbReference type="EMBL" id="AF389426">
    <property type="protein sequence ID" value="AAM69449.1"/>
    <property type="molecule type" value="mRNA"/>
</dbReference>
<dbReference type="EMBL" id="AF389427">
    <property type="protein sequence ID" value="AAM69450.1"/>
    <property type="molecule type" value="mRNA"/>
</dbReference>
<dbReference type="EMBL" id="AF389428">
    <property type="protein sequence ID" value="AAM69451.1"/>
    <property type="molecule type" value="mRNA"/>
</dbReference>
<dbReference type="EMBL" id="AF389429">
    <property type="protein sequence ID" value="AAM69452.1"/>
    <property type="molecule type" value="mRNA"/>
</dbReference>
<dbReference type="EMBL" id="AF389430">
    <property type="protein sequence ID" value="AAM69453.1"/>
    <property type="molecule type" value="mRNA"/>
</dbReference>
<dbReference type="EMBL" id="AB040912">
    <property type="protein sequence ID" value="BAA96003.2"/>
    <property type="status" value="ALT_INIT"/>
    <property type="molecule type" value="mRNA"/>
</dbReference>
<dbReference type="EMBL" id="AC018900">
    <property type="status" value="NOT_ANNOTATED_CDS"/>
    <property type="molecule type" value="Genomic_DNA"/>
</dbReference>
<dbReference type="EMBL" id="AC044787">
    <property type="status" value="NOT_ANNOTATED_CDS"/>
    <property type="molecule type" value="Genomic_DNA"/>
</dbReference>
<dbReference type="EMBL" id="AC009558">
    <property type="status" value="NOT_ANNOTATED_CDS"/>
    <property type="molecule type" value="Genomic_DNA"/>
</dbReference>
<dbReference type="EMBL" id="AC012050">
    <property type="status" value="NOT_ANNOTATED_CDS"/>
    <property type="molecule type" value="Genomic_DNA"/>
</dbReference>
<dbReference type="EMBL" id="AC023905">
    <property type="status" value="NOT_ANNOTATED_CDS"/>
    <property type="molecule type" value="Genomic_DNA"/>
</dbReference>
<dbReference type="EMBL" id="AC066615">
    <property type="status" value="NOT_ANNOTATED_CDS"/>
    <property type="molecule type" value="Genomic_DNA"/>
</dbReference>
<dbReference type="EMBL" id="AC084882">
    <property type="status" value="NOT_ANNOTATED_CDS"/>
    <property type="molecule type" value="Genomic_DNA"/>
</dbReference>
<dbReference type="EMBL" id="BC150253">
    <property type="protein sequence ID" value="AAI50254.1"/>
    <property type="molecule type" value="mRNA"/>
</dbReference>
<dbReference type="CCDS" id="CCDS32224.1">
    <molecule id="Q8NFY4-2"/>
</dbReference>
<dbReference type="CCDS" id="CCDS32225.1">
    <molecule id="Q8NFY4-1"/>
</dbReference>
<dbReference type="CCDS" id="CCDS32226.1">
    <molecule id="Q8NFY4-4"/>
</dbReference>
<dbReference type="CCDS" id="CCDS32227.1">
    <molecule id="Q8NFY4-3"/>
</dbReference>
<dbReference type="CCDS" id="CCDS32228.1">
    <molecule id="Q8NFY4-8"/>
</dbReference>
<dbReference type="CCDS" id="CCDS32229.1">
    <molecule id="Q8NFY4-7"/>
</dbReference>
<dbReference type="RefSeq" id="NP_001185928.1">
    <molecule id="Q8NFY4-2"/>
    <property type="nucleotide sequence ID" value="NM_001198999.2"/>
</dbReference>
<dbReference type="RefSeq" id="NP_001345280.1">
    <molecule id="Q8NFY4-1"/>
    <property type="nucleotide sequence ID" value="NM_001358351.3"/>
</dbReference>
<dbReference type="RefSeq" id="NP_065909.1">
    <molecule id="Q8NFY4-2"/>
    <property type="nucleotide sequence ID" value="NM_020858.2"/>
</dbReference>
<dbReference type="RefSeq" id="NP_079242.2">
    <molecule id="Q8NFY4-7"/>
    <property type="nucleotide sequence ID" value="NM_024966.2"/>
</dbReference>
<dbReference type="RefSeq" id="NP_705869.1">
    <molecule id="Q8NFY4-3"/>
    <property type="nucleotide sequence ID" value="NM_153616.2"/>
</dbReference>
<dbReference type="RefSeq" id="NP_705870.1">
    <molecule id="Q8NFY4-4"/>
    <property type="nucleotide sequence ID" value="NM_153617.2"/>
</dbReference>
<dbReference type="RefSeq" id="NP_705871.1">
    <molecule id="Q8NFY4-1"/>
    <property type="nucleotide sequence ID" value="NM_153618.2"/>
</dbReference>
<dbReference type="RefSeq" id="NP_705872.1">
    <molecule id="Q8NFY4-8"/>
    <property type="nucleotide sequence ID" value="NM_153619.1"/>
</dbReference>
<dbReference type="RefSeq" id="XP_005254744.1">
    <property type="nucleotide sequence ID" value="XM_005254687.2"/>
</dbReference>
<dbReference type="RefSeq" id="XP_005254746.1">
    <property type="nucleotide sequence ID" value="XM_005254689.3"/>
</dbReference>
<dbReference type="RefSeq" id="XP_011520379.1">
    <property type="nucleotide sequence ID" value="XM_011522077.2"/>
</dbReference>
<dbReference type="RefSeq" id="XP_011520380.1">
    <property type="nucleotide sequence ID" value="XM_011522078.2"/>
</dbReference>
<dbReference type="RefSeq" id="XP_011520381.1">
    <property type="nucleotide sequence ID" value="XM_011522079.2"/>
</dbReference>
<dbReference type="RefSeq" id="XP_011520382.1">
    <property type="nucleotide sequence ID" value="XM_011522080.2"/>
</dbReference>
<dbReference type="RefSeq" id="XP_011520383.1">
    <property type="nucleotide sequence ID" value="XM_011522081.2"/>
</dbReference>
<dbReference type="RefSeq" id="XP_016878108.1">
    <property type="nucleotide sequence ID" value="XM_017022619.1"/>
</dbReference>
<dbReference type="RefSeq" id="XP_016878109.1">
    <property type="nucleotide sequence ID" value="XM_017022620.1"/>
</dbReference>
<dbReference type="RefSeq" id="XP_016878110.1">
    <property type="nucleotide sequence ID" value="XM_017022621.1"/>
</dbReference>
<dbReference type="SMR" id="Q8NFY4"/>
<dbReference type="BioGRID" id="123081">
    <property type="interactions" value="16"/>
</dbReference>
<dbReference type="CORUM" id="Q8NFY4"/>
<dbReference type="FunCoup" id="Q8NFY4">
    <property type="interactions" value="1387"/>
</dbReference>
<dbReference type="IntAct" id="Q8NFY4">
    <property type="interactions" value="2"/>
</dbReference>
<dbReference type="STRING" id="9606.ENSP00000324857"/>
<dbReference type="CarbonylDB" id="Q8NFY4"/>
<dbReference type="GlyCosmos" id="Q8NFY4">
    <property type="glycosylation" value="5 sites, No reported glycans"/>
</dbReference>
<dbReference type="GlyGen" id="Q8NFY4">
    <property type="glycosylation" value="8 sites, 1 N-linked glycan (1 site), 1 O-linked glycan (2 sites)"/>
</dbReference>
<dbReference type="iPTMnet" id="Q8NFY4"/>
<dbReference type="PhosphoSitePlus" id="Q8NFY4"/>
<dbReference type="BioMuta" id="SEMA6D"/>
<dbReference type="DMDM" id="74715611"/>
<dbReference type="jPOST" id="Q8NFY4"/>
<dbReference type="MassIVE" id="Q8NFY4"/>
<dbReference type="PaxDb" id="9606-ENSP00000324857"/>
<dbReference type="PeptideAtlas" id="Q8NFY4"/>
<dbReference type="ProteomicsDB" id="1522"/>
<dbReference type="ProteomicsDB" id="73385">
    <molecule id="Q8NFY4-1"/>
</dbReference>
<dbReference type="ProteomicsDB" id="73386">
    <molecule id="Q8NFY4-2"/>
</dbReference>
<dbReference type="ProteomicsDB" id="73387">
    <molecule id="Q8NFY4-3"/>
</dbReference>
<dbReference type="ProteomicsDB" id="73388">
    <molecule id="Q8NFY4-4"/>
</dbReference>
<dbReference type="ProteomicsDB" id="73389">
    <molecule id="Q8NFY4-5"/>
</dbReference>
<dbReference type="ProteomicsDB" id="73390">
    <molecule id="Q8NFY4-6"/>
</dbReference>
<dbReference type="ProteomicsDB" id="73391">
    <molecule id="Q8NFY4-7"/>
</dbReference>
<dbReference type="Antibodypedia" id="24461">
    <property type="antibodies" value="176 antibodies from 28 providers"/>
</dbReference>
<dbReference type="DNASU" id="80031"/>
<dbReference type="Ensembl" id="ENST00000316364.9">
    <molecule id="Q8NFY4-1"/>
    <property type="protein sequence ID" value="ENSP00000324857.5"/>
    <property type="gene ID" value="ENSG00000137872.17"/>
</dbReference>
<dbReference type="Ensembl" id="ENST00000354744.8">
    <molecule id="Q8NFY4-4"/>
    <property type="protein sequence ID" value="ENSP00000346786.4"/>
    <property type="gene ID" value="ENSG00000137872.17"/>
</dbReference>
<dbReference type="Ensembl" id="ENST00000355997.7">
    <molecule id="Q8NFY4-8"/>
    <property type="protein sequence ID" value="ENSP00000348276.3"/>
    <property type="gene ID" value="ENSG00000137872.17"/>
</dbReference>
<dbReference type="Ensembl" id="ENST00000358066.8">
    <molecule id="Q8NFY4-2"/>
    <property type="protein sequence ID" value="ENSP00000350770.4"/>
    <property type="gene ID" value="ENSG00000137872.17"/>
</dbReference>
<dbReference type="Ensembl" id="ENST00000389425.7">
    <molecule id="Q8NFY4-7"/>
    <property type="protein sequence ID" value="ENSP00000374076.3"/>
    <property type="gene ID" value="ENSG00000137872.17"/>
</dbReference>
<dbReference type="Ensembl" id="ENST00000389428.7">
    <molecule id="Q8NFY4-3"/>
    <property type="protein sequence ID" value="ENSP00000374079.3"/>
    <property type="gene ID" value="ENSG00000137872.17"/>
</dbReference>
<dbReference type="Ensembl" id="ENST00000536845.7">
    <molecule id="Q8NFY4-1"/>
    <property type="protein sequence ID" value="ENSP00000446152.3"/>
    <property type="gene ID" value="ENSG00000137872.17"/>
</dbReference>
<dbReference type="Ensembl" id="ENST00000558014.5">
    <molecule id="Q8NFY4-2"/>
    <property type="protein sequence ID" value="ENSP00000452815.1"/>
    <property type="gene ID" value="ENSG00000137872.17"/>
</dbReference>
<dbReference type="Ensembl" id="ENST00000558816.5">
    <molecule id="Q8NFY4-8"/>
    <property type="protein sequence ID" value="ENSP00000453661.1"/>
    <property type="gene ID" value="ENSG00000137872.17"/>
</dbReference>
<dbReference type="GeneID" id="80031"/>
<dbReference type="KEGG" id="hsa:80031"/>
<dbReference type="MANE-Select" id="ENST00000536845.7">
    <property type="protein sequence ID" value="ENSP00000446152.3"/>
    <property type="RefSeq nucleotide sequence ID" value="NM_001358351.3"/>
    <property type="RefSeq protein sequence ID" value="NP_001345280.1"/>
</dbReference>
<dbReference type="UCSC" id="uc001zvw.4">
    <molecule id="Q8NFY4-1"/>
    <property type="organism name" value="human"/>
</dbReference>
<dbReference type="AGR" id="HGNC:16770"/>
<dbReference type="CTD" id="80031"/>
<dbReference type="DisGeNET" id="80031"/>
<dbReference type="GeneCards" id="SEMA6D"/>
<dbReference type="HGNC" id="HGNC:16770">
    <property type="gene designation" value="SEMA6D"/>
</dbReference>
<dbReference type="HPA" id="ENSG00000137872">
    <property type="expression patterns" value="Tissue enhanced (intestine, placenta)"/>
</dbReference>
<dbReference type="MalaCards" id="SEMA6D"/>
<dbReference type="MIM" id="609295">
    <property type="type" value="gene"/>
</dbReference>
<dbReference type="neXtProt" id="NX_Q8NFY4"/>
<dbReference type="OpenTargets" id="ENSG00000137872"/>
<dbReference type="PharmGKB" id="PA134951035"/>
<dbReference type="VEuPathDB" id="HostDB:ENSG00000137872"/>
<dbReference type="eggNOG" id="KOG3611">
    <property type="taxonomic scope" value="Eukaryota"/>
</dbReference>
<dbReference type="GeneTree" id="ENSGT00940000159303"/>
<dbReference type="HOGENOM" id="CLU_009051_2_1_1"/>
<dbReference type="InParanoid" id="Q8NFY4"/>
<dbReference type="OMA" id="EAYNHAX"/>
<dbReference type="OrthoDB" id="9988752at2759"/>
<dbReference type="PAN-GO" id="Q8NFY4">
    <property type="GO annotations" value="10 GO annotations based on evolutionary models"/>
</dbReference>
<dbReference type="PhylomeDB" id="Q8NFY4"/>
<dbReference type="TreeFam" id="TF316102"/>
<dbReference type="PathwayCommons" id="Q8NFY4"/>
<dbReference type="Reactome" id="R-HSA-416700">
    <property type="pathway name" value="Other semaphorin interactions"/>
</dbReference>
<dbReference type="SignaLink" id="Q8NFY4"/>
<dbReference type="BioGRID-ORCS" id="80031">
    <property type="hits" value="12 hits in 1140 CRISPR screens"/>
</dbReference>
<dbReference type="ChiTaRS" id="SEMA6D">
    <property type="organism name" value="human"/>
</dbReference>
<dbReference type="GenomeRNAi" id="80031"/>
<dbReference type="Pharos" id="Q8NFY4">
    <property type="development level" value="Tbio"/>
</dbReference>
<dbReference type="PRO" id="PR:Q8NFY4"/>
<dbReference type="Proteomes" id="UP000005640">
    <property type="component" value="Chromosome 15"/>
</dbReference>
<dbReference type="RNAct" id="Q8NFY4">
    <property type="molecule type" value="protein"/>
</dbReference>
<dbReference type="Bgee" id="ENSG00000137872">
    <property type="expression patterns" value="Expressed in jejunal mucosa and 181 other cell types or tissues"/>
</dbReference>
<dbReference type="ExpressionAtlas" id="Q8NFY4">
    <property type="expression patterns" value="baseline and differential"/>
</dbReference>
<dbReference type="GO" id="GO:0009986">
    <property type="term" value="C:cell surface"/>
    <property type="evidence" value="ECO:0000315"/>
    <property type="project" value="UniProtKB"/>
</dbReference>
<dbReference type="GO" id="GO:0005737">
    <property type="term" value="C:cytoplasm"/>
    <property type="evidence" value="ECO:0000315"/>
    <property type="project" value="UniProtKB"/>
</dbReference>
<dbReference type="GO" id="GO:0005794">
    <property type="term" value="C:Golgi apparatus"/>
    <property type="evidence" value="ECO:0000314"/>
    <property type="project" value="HPA"/>
</dbReference>
<dbReference type="GO" id="GO:0005886">
    <property type="term" value="C:plasma membrane"/>
    <property type="evidence" value="ECO:0000314"/>
    <property type="project" value="HPA"/>
</dbReference>
<dbReference type="GO" id="GO:0045499">
    <property type="term" value="F:chemorepellent activity"/>
    <property type="evidence" value="ECO:0000318"/>
    <property type="project" value="GO_Central"/>
</dbReference>
<dbReference type="GO" id="GO:0048018">
    <property type="term" value="F:receptor ligand activity"/>
    <property type="evidence" value="ECO:0000250"/>
    <property type="project" value="UniProtKB"/>
</dbReference>
<dbReference type="GO" id="GO:0030215">
    <property type="term" value="F:semaphorin receptor binding"/>
    <property type="evidence" value="ECO:0000318"/>
    <property type="project" value="GO_Central"/>
</dbReference>
<dbReference type="GO" id="GO:0007411">
    <property type="term" value="P:axon guidance"/>
    <property type="evidence" value="ECO:0000318"/>
    <property type="project" value="GO_Central"/>
</dbReference>
<dbReference type="GO" id="GO:0030517">
    <property type="term" value="P:negative regulation of axon extension"/>
    <property type="evidence" value="ECO:0000314"/>
    <property type="project" value="UniProtKB"/>
</dbReference>
<dbReference type="GO" id="GO:0014912">
    <property type="term" value="P:negative regulation of smooth muscle cell migration"/>
    <property type="evidence" value="ECO:0007669"/>
    <property type="project" value="Ensembl"/>
</dbReference>
<dbReference type="GO" id="GO:0001755">
    <property type="term" value="P:neural crest cell migration"/>
    <property type="evidence" value="ECO:0000318"/>
    <property type="project" value="GO_Central"/>
</dbReference>
<dbReference type="GO" id="GO:0030335">
    <property type="term" value="P:positive regulation of cell migration"/>
    <property type="evidence" value="ECO:0000318"/>
    <property type="project" value="GO_Central"/>
</dbReference>
<dbReference type="GO" id="GO:0014911">
    <property type="term" value="P:positive regulation of smooth muscle cell migration"/>
    <property type="evidence" value="ECO:0007669"/>
    <property type="project" value="Ensembl"/>
</dbReference>
<dbReference type="GO" id="GO:0071526">
    <property type="term" value="P:semaphorin-plexin signaling pathway"/>
    <property type="evidence" value="ECO:0000250"/>
    <property type="project" value="UniProt"/>
</dbReference>
<dbReference type="GO" id="GO:0014909">
    <property type="term" value="P:smooth muscle cell migration"/>
    <property type="evidence" value="ECO:0007669"/>
    <property type="project" value="Ensembl"/>
</dbReference>
<dbReference type="GO" id="GO:0002291">
    <property type="term" value="P:T cell activation via T cell receptor contact with antigen bound to MHC molecule on antigen presenting cell"/>
    <property type="evidence" value="ECO:0000250"/>
    <property type="project" value="UniProtKB"/>
</dbReference>
<dbReference type="GO" id="GO:0021591">
    <property type="term" value="P:ventricular system development"/>
    <property type="evidence" value="ECO:0007669"/>
    <property type="project" value="Ensembl"/>
</dbReference>
<dbReference type="CDD" id="cd11269">
    <property type="entry name" value="Sema_6D"/>
    <property type="match status" value="1"/>
</dbReference>
<dbReference type="FunFam" id="3.30.1680.10:FF:000004">
    <property type="entry name" value="semaphorin-6D isoform X1"/>
    <property type="match status" value="1"/>
</dbReference>
<dbReference type="FunFam" id="2.130.10.10:FF:000013">
    <property type="entry name" value="semaphorin-6D isoform X2"/>
    <property type="match status" value="1"/>
</dbReference>
<dbReference type="Gene3D" id="3.30.1680.10">
    <property type="entry name" value="ligand-binding face of the semaphorins, domain 2"/>
    <property type="match status" value="1"/>
</dbReference>
<dbReference type="Gene3D" id="2.130.10.10">
    <property type="entry name" value="YVTN repeat-like/Quinoprotein amine dehydrogenase"/>
    <property type="match status" value="1"/>
</dbReference>
<dbReference type="InterPro" id="IPR002165">
    <property type="entry name" value="Plexin_repeat"/>
</dbReference>
<dbReference type="InterPro" id="IPR016201">
    <property type="entry name" value="PSI"/>
</dbReference>
<dbReference type="InterPro" id="IPR001627">
    <property type="entry name" value="Semap_dom"/>
</dbReference>
<dbReference type="InterPro" id="IPR036352">
    <property type="entry name" value="Semap_dom_sf"/>
</dbReference>
<dbReference type="InterPro" id="IPR027231">
    <property type="entry name" value="Semaphorin"/>
</dbReference>
<dbReference type="InterPro" id="IPR015943">
    <property type="entry name" value="WD40/YVTN_repeat-like_dom_sf"/>
</dbReference>
<dbReference type="PANTHER" id="PTHR11036">
    <property type="entry name" value="SEMAPHORIN"/>
    <property type="match status" value="1"/>
</dbReference>
<dbReference type="PANTHER" id="PTHR11036:SF65">
    <property type="entry name" value="SEMAPHORIN-6D"/>
    <property type="match status" value="1"/>
</dbReference>
<dbReference type="Pfam" id="PF01437">
    <property type="entry name" value="PSI"/>
    <property type="match status" value="1"/>
</dbReference>
<dbReference type="Pfam" id="PF01403">
    <property type="entry name" value="Sema"/>
    <property type="match status" value="1"/>
</dbReference>
<dbReference type="SMART" id="SM00423">
    <property type="entry name" value="PSI"/>
    <property type="match status" value="1"/>
</dbReference>
<dbReference type="SMART" id="SM00630">
    <property type="entry name" value="Sema"/>
    <property type="match status" value="1"/>
</dbReference>
<dbReference type="SUPFAM" id="SSF103575">
    <property type="entry name" value="Plexin repeat"/>
    <property type="match status" value="1"/>
</dbReference>
<dbReference type="SUPFAM" id="SSF101912">
    <property type="entry name" value="Sema domain"/>
    <property type="match status" value="1"/>
</dbReference>
<dbReference type="PROSITE" id="PS51004">
    <property type="entry name" value="SEMA"/>
    <property type="match status" value="1"/>
</dbReference>
<feature type="signal peptide" evidence="2">
    <location>
        <begin position="1"/>
        <end position="20"/>
    </location>
</feature>
<feature type="chain" id="PRO_0000044615" description="Semaphorin-6D">
    <location>
        <begin position="21"/>
        <end position="1073"/>
    </location>
</feature>
<feature type="topological domain" description="Extracellular" evidence="2">
    <location>
        <begin position="21"/>
        <end position="662"/>
    </location>
</feature>
<feature type="transmembrane region" description="Helical" evidence="2">
    <location>
        <begin position="663"/>
        <end position="683"/>
    </location>
</feature>
<feature type="topological domain" description="Cytoplasmic" evidence="2">
    <location>
        <begin position="684"/>
        <end position="1073"/>
    </location>
</feature>
<feature type="domain" description="Sema" evidence="3">
    <location>
        <begin position="27"/>
        <end position="512"/>
    </location>
</feature>
<feature type="domain" description="PSI">
    <location>
        <begin position="514"/>
        <end position="569"/>
    </location>
</feature>
<feature type="region of interest" description="Disordered" evidence="4">
    <location>
        <begin position="744"/>
        <end position="775"/>
    </location>
</feature>
<feature type="region of interest" description="Disordered" evidence="4">
    <location>
        <begin position="787"/>
        <end position="825"/>
    </location>
</feature>
<feature type="region of interest" description="Disordered" evidence="4">
    <location>
        <begin position="839"/>
        <end position="874"/>
    </location>
</feature>
<feature type="region of interest" description="Disordered" evidence="4">
    <location>
        <begin position="914"/>
        <end position="1005"/>
    </location>
</feature>
<feature type="region of interest" description="Disordered" evidence="4">
    <location>
        <begin position="1021"/>
        <end position="1073"/>
    </location>
</feature>
<feature type="compositionally biased region" description="Basic and acidic residues" evidence="4">
    <location>
        <begin position="790"/>
        <end position="805"/>
    </location>
</feature>
<feature type="compositionally biased region" description="Polar residues" evidence="4">
    <location>
        <begin position="931"/>
        <end position="942"/>
    </location>
</feature>
<feature type="compositionally biased region" description="Polar residues" evidence="4">
    <location>
        <begin position="980"/>
        <end position="995"/>
    </location>
</feature>
<feature type="compositionally biased region" description="Polar residues" evidence="4">
    <location>
        <begin position="1021"/>
        <end position="1037"/>
    </location>
</feature>
<feature type="modified residue" description="Phosphoserine" evidence="10">
    <location>
        <position position="723"/>
    </location>
</feature>
<feature type="modified residue" description="Phosphoserine" evidence="1">
    <location>
        <position position="734"/>
    </location>
</feature>
<feature type="modified residue" description="Phosphoserine" evidence="10">
    <location>
        <position position="744"/>
    </location>
</feature>
<feature type="modified residue" description="Phosphothreonine" evidence="10">
    <location>
        <position position="773"/>
    </location>
</feature>
<feature type="modified residue" description="Phosphoserine" evidence="10">
    <location>
        <position position="931"/>
    </location>
</feature>
<feature type="modified residue" description="Phosphoserine" evidence="10">
    <location>
        <position position="957"/>
    </location>
</feature>
<feature type="modified residue" description="Phosphoserine" evidence="10">
    <location>
        <position position="983"/>
    </location>
</feature>
<feature type="glycosylation site" description="N-linked (GlcNAc...) asparagine" evidence="2">
    <location>
        <position position="51"/>
    </location>
</feature>
<feature type="glycosylation site" description="N-linked (GlcNAc...) asparagine" evidence="2">
    <location>
        <position position="283"/>
    </location>
</feature>
<feature type="glycosylation site" description="N-linked (GlcNAc...) asparagine" evidence="2">
    <location>
        <position position="435"/>
    </location>
</feature>
<feature type="glycosylation site" description="N-linked (GlcNAc...) asparagine" evidence="2">
    <location>
        <position position="461"/>
    </location>
</feature>
<feature type="glycosylation site" description="N-linked (GlcNAc...) asparagine" evidence="2">
    <location>
        <position position="631"/>
    </location>
</feature>
<feature type="disulfide bond" evidence="3">
    <location>
        <begin position="108"/>
        <end position="118"/>
    </location>
</feature>
<feature type="disulfide bond" evidence="3">
    <location>
        <begin position="136"/>
        <end position="145"/>
    </location>
</feature>
<feature type="disulfide bond" evidence="3">
    <location>
        <begin position="259"/>
        <end position="370"/>
    </location>
</feature>
<feature type="disulfide bond" evidence="3">
    <location>
        <begin position="284"/>
        <end position="329"/>
    </location>
</feature>
<feature type="disulfide bond" evidence="3">
    <location>
        <begin position="477"/>
        <end position="506"/>
    </location>
</feature>
<feature type="disulfide bond" evidence="3">
    <location>
        <begin position="515"/>
        <end position="533"/>
    </location>
</feature>
<feature type="disulfide bond" evidence="3">
    <location>
        <begin position="521"/>
        <end position="568"/>
    </location>
</feature>
<feature type="disulfide bond" evidence="3">
    <location>
        <begin position="525"/>
        <end position="541"/>
    </location>
</feature>
<feature type="splice variant" id="VSP_016564" description="In isoform 7." evidence="6">
    <location>
        <begin position="477"/>
        <end position="1073"/>
    </location>
</feature>
<feature type="splice variant" id="VSP_016565" description="In isoform 1 and isoform 5." evidence="5 6 7">
    <original>L</original>
    <variation>LLLTEDFFAFHNHS</variation>
    <location>
        <position position="549"/>
    </location>
</feature>
<feature type="splice variant" id="VSP_016566" description="In isoform 1 and isoform 2." evidence="5 6 7">
    <location>
        <begin position="570"/>
        <end position="644"/>
    </location>
</feature>
<feature type="splice variant" id="VSP_016572" description="In isoform 6 and isoform 8." evidence="8">
    <location>
        <begin position="570"/>
        <end position="588"/>
    </location>
</feature>
<feature type="splice variant" id="VSP_016567" description="In isoform 3 and isoform 5." evidence="6">
    <location>
        <begin position="589"/>
        <end position="644"/>
    </location>
</feature>
<feature type="splice variant" id="VSP_054084" description="In isoform 8." evidence="8">
    <original>ASIPEITPKVIDTWRPKLTSSRKFVVQDDPNTSDFTDPLSGIPKGVRWEVQSGESNQMVHMNVLITCVFAAFVLGAFIAGVAVYCYRDMFVRKNRKIHKDAESAQSCTDSSGSFAKLNGLFDSPVKEYQQNIDSPKLYSNLLTSRKELPPNGDTKSMVMDHRGQPPELAALPTPESTPVLHQKTLQAMKSHSEKAHGHGASRKETPQFFPSSPPPHSPLSHGHIPSAIVLPNATHDYNTSFSNSNAHKAEKKLQNIDHPLTKSSSKRDHRRSVDSRNTLNDLLKHLNDPNSNPKAIMGDIQMAHQNLMLDPMGSMSEVPPKVPNREASLYSPPSTLPRNSPTKRVDVPTTPGVPMTSLERQRGYHKNSSQRHSISAMPKNLNSPNGVLLSRQPSMNRGGYMPTPTGAKVDYIQGTPVSVHLQPSLSRQSSYTSNGTLPRTGLKRTPSLKPDVPPKPSFVPQTPSVRPLNKYTY</original>
    <variation>VYDGKSSLESPTRWST</variation>
    <location>
        <begin position="601"/>
        <end position="1073"/>
    </location>
</feature>
<feature type="sequence variant" id="VAR_051931" description="In dbSNP:rs3743279.">
    <original>N</original>
    <variation>S</variation>
    <location>
        <position position="307"/>
    </location>
</feature>
<feature type="sequence variant" id="VAR_051932" description="In dbSNP:rs532598.">
    <original>S</original>
    <variation>N</variation>
    <location>
        <position position="478"/>
    </location>
</feature>
<feature type="sequence variant" id="VAR_051933" description="In dbSNP:rs16960074.">
    <original>S</original>
    <variation>T</variation>
    <location>
        <position position="969"/>
    </location>
</feature>
<gene>
    <name evidence="9" type="primary">SEMA6D</name>
    <name type="synonym">KIAA1479</name>
</gene>
<proteinExistence type="evidence at protein level"/>
<sequence length="1073" mass="119872">MRVFLLCAYILLLMVSQLRAVSFPEDDEPLNTVDYHYSRQYPVFRGRPSGNESQHRLDFQLMLKIRDTLYIAGRDQVYTVNLNEMPKTEVIPNKKLTWRSRQQDRENCAMKGKHKDECHNFIKVFVPRNDEMVFVCGTNAFNPMCRYYRLSTLEYDGEEISGLARCPFDARQTNVALFADGKLYSATVADFLASDAVIYRSMGDGSALRTIKYDSKWIKEPHFLHAIEYGNYVYFFFREIAVEHNNLGKAVYSRVARICKNDMGGSQRVLEKHWTSFLKARLNCSVPGDSFFYFDVLQSITDIIQINGIPTVVGVFTTQLNSIPGSAVCAFSMDDIEKVFKGRFKEQKTPDSVWTAVPEDKVPKPRPGCCAKHGLAEAYKTSIDFPDETLSFIKSHPLMDSAVPPIADEPWFTKTRVRYRLTAISVDHSAGPYQNYTVIFVGSEAGMVLKVLAKTSPFSLNDSVLLEEIEAYNHAKCSAENEEDKKVISLQLDKDHHALYVAFSSCIIRIPLSRCERYGSCKKSCIASRDPYCGWLSQGSCGRVTPGMLAEGYEQDTEFGNTAHLGDCHEILPTSTTPDYKIFGGPTSDMEVSSSSVTTMASIPEITPKVIDTWRPKLTSSRKFVVQDDPNTSDFTDPLSGIPKGVRWEVQSGESNQMVHMNVLITCVFAAFVLGAFIAGVAVYCYRDMFVRKNRKIHKDAESAQSCTDSSGSFAKLNGLFDSPVKEYQQNIDSPKLYSNLLTSRKELPPNGDTKSMVMDHRGQPPELAALPTPESTPVLHQKTLQAMKSHSEKAHGHGASRKETPQFFPSSPPPHSPLSHGHIPSAIVLPNATHDYNTSFSNSNAHKAEKKLQNIDHPLTKSSSKRDHRRSVDSRNTLNDLLKHLNDPNSNPKAIMGDIQMAHQNLMLDPMGSMSEVPPKVPNREASLYSPPSTLPRNSPTKRVDVPTTPGVPMTSLERQRGYHKNSSQRHSISAMPKNLNSPNGVLLSRQPSMNRGGYMPTPTGAKVDYIQGTPVSVHLQPSLSRQSSYTSNGTLPRTGLKRTPSLKPDVPPKPSFVPQTPSVRPLNKYTY</sequence>
<name>SEM6D_HUMAN</name>